<reference key="1">
    <citation type="journal article" date="1993" name="Plant Mol. Biol.">
        <title>Characterization and transcript analysis of the major phycobiliprotein subunit genes from Aglaothamnion neglectum (Rhodophyta).</title>
        <authorList>
            <person name="Apt K.E."/>
            <person name="Grossman A.R."/>
        </authorList>
    </citation>
    <scope>NUCLEOTIDE SEQUENCE [GENOMIC DNA]</scope>
</reference>
<feature type="chain" id="PRO_0000199116" description="C-phycocyanin alpha subunit">
    <location>
        <begin position="1"/>
        <end position="162"/>
    </location>
</feature>
<feature type="binding site" description="covalent" evidence="2">
    <location>
        <position position="84"/>
    </location>
    <ligand>
        <name>(2R,3E)-phycocyanobilin</name>
        <dbReference type="ChEBI" id="CHEBI:85275"/>
    </ligand>
</feature>
<name>PHCA_AGLNE</name>
<proteinExistence type="inferred from homology"/>
<gene>
    <name type="primary">cpcA</name>
</gene>
<protein>
    <recommendedName>
        <fullName>C-phycocyanin alpha subunit</fullName>
    </recommendedName>
</protein>
<organism>
    <name type="scientific">Aglaothamnion neglectum</name>
    <name type="common">Red alga</name>
    <dbReference type="NCBI Taxonomy" id="2765"/>
    <lineage>
        <taxon>Eukaryota</taxon>
        <taxon>Rhodophyta</taxon>
        <taxon>Florideophyceae</taxon>
        <taxon>Rhodymeniophycidae</taxon>
        <taxon>Ceramiales</taxon>
        <taxon>Callithamniaceae</taxon>
        <taxon>Aglaothamnion</taxon>
    </lineage>
</organism>
<accession>P28557</accession>
<geneLocation type="chloroplast"/>
<comment type="function">
    <text>Light-harvesting photosynthetic bile pigment-protein from the phycobiliprotein complex (phycobilisome, PBS). Phycocyanin is the major phycobiliprotein in the PBS rod.</text>
</comment>
<comment type="subunit">
    <text evidence="2">Heterodimer of an alpha and a beta subunit, which further assembles into trimers and the trimers into hexamers. The basic functional unit of phycobiliproteins is a ring-shaped hexamer formed from two back-to-back trimers contacting via the alpha chain subunits. The trimers are composed of alpha/beta subunit heterodimers arranged around a three-fold axis of symmetry. The phycoerythrins also contain a gamma subunit which is located in the center of the hexamer.</text>
</comment>
<comment type="subcellular location">
    <subcellularLocation>
        <location evidence="1">Plastid</location>
        <location evidence="1">Chloroplast thylakoid membrane</location>
        <topology evidence="1">Peripheral membrane protein</topology>
        <orientation evidence="1">Stromal side</orientation>
    </subcellularLocation>
    <text evidence="1">Part of the phycobilisome rod.</text>
</comment>
<comment type="PTM">
    <text evidence="2">Contains one covalently linked phycocyanobilin chromophore.</text>
</comment>
<comment type="similarity">
    <text evidence="3">Belongs to the phycobiliprotein family.</text>
</comment>
<dbReference type="EMBL" id="Z11906">
    <property type="protein sequence ID" value="CAA77961.1"/>
    <property type="molecule type" value="Genomic_DNA"/>
</dbReference>
<dbReference type="PIR" id="S30940">
    <property type="entry name" value="S30940"/>
</dbReference>
<dbReference type="SMR" id="P28557"/>
<dbReference type="GO" id="GO:0009535">
    <property type="term" value="C:chloroplast thylakoid membrane"/>
    <property type="evidence" value="ECO:0007669"/>
    <property type="project" value="UniProtKB-SubCell"/>
</dbReference>
<dbReference type="GO" id="GO:0030089">
    <property type="term" value="C:phycobilisome"/>
    <property type="evidence" value="ECO:0007669"/>
    <property type="project" value="UniProtKB-KW"/>
</dbReference>
<dbReference type="GO" id="GO:0015979">
    <property type="term" value="P:photosynthesis"/>
    <property type="evidence" value="ECO:0007669"/>
    <property type="project" value="UniProtKB-KW"/>
</dbReference>
<dbReference type="CDD" id="cd14770">
    <property type="entry name" value="PC-PEC_alpha"/>
    <property type="match status" value="1"/>
</dbReference>
<dbReference type="Gene3D" id="1.10.490.20">
    <property type="entry name" value="Phycocyanins"/>
    <property type="match status" value="1"/>
</dbReference>
<dbReference type="InterPro" id="IPR009050">
    <property type="entry name" value="Globin-like_sf"/>
</dbReference>
<dbReference type="InterPro" id="IPR012128">
    <property type="entry name" value="Phycobilisome_asu/bsu"/>
</dbReference>
<dbReference type="InterPro" id="IPR038719">
    <property type="entry name" value="Phycobilisome_asu/bsu_sf"/>
</dbReference>
<dbReference type="InterPro" id="IPR006246">
    <property type="entry name" value="Phycocyanin_a"/>
</dbReference>
<dbReference type="NCBIfam" id="TIGR01338">
    <property type="entry name" value="phycocy_alpha"/>
    <property type="match status" value="1"/>
</dbReference>
<dbReference type="PANTHER" id="PTHR34011:SF4">
    <property type="entry name" value="C-PHYCOCYANIN ALPHA SUBUNIT"/>
    <property type="match status" value="1"/>
</dbReference>
<dbReference type="PANTHER" id="PTHR34011">
    <property type="entry name" value="PHYCOBILISOME 32.1 KDA LINKER POLYPEPTIDE, PHYCOCYANIN-ASSOCIATED, ROD 2-RELATED"/>
    <property type="match status" value="1"/>
</dbReference>
<dbReference type="Pfam" id="PF00502">
    <property type="entry name" value="Phycobilisome"/>
    <property type="match status" value="1"/>
</dbReference>
<dbReference type="PIRSF" id="PIRSF000081">
    <property type="entry name" value="Phycocyanin"/>
    <property type="match status" value="1"/>
</dbReference>
<dbReference type="SUPFAM" id="SSF46458">
    <property type="entry name" value="Globin-like"/>
    <property type="match status" value="1"/>
</dbReference>
<sequence length="162" mass="17694">MKTPITEAIACADSQGRFLSNGELQSINGRYQRATASLEAAKSLNNNAQRLITGAAQAVYTKFPFVTQMPGPTYASRAIGKAKCARDIGYYLRMTTYCLVVGATGPMDEYLVAGLEEINRSFELSPSWYIEALEYIKNTHGLSGQAANEANTYLDYAINILS</sequence>
<keyword id="KW-0042">Antenna complex</keyword>
<keyword id="KW-0089">Bile pigment</keyword>
<keyword id="KW-0150">Chloroplast</keyword>
<keyword id="KW-0157">Chromophore</keyword>
<keyword id="KW-0249">Electron transport</keyword>
<keyword id="KW-0472">Membrane</keyword>
<keyword id="KW-0602">Photosynthesis</keyword>
<keyword id="KW-0605">Phycobilisome</keyword>
<keyword id="KW-0934">Plastid</keyword>
<keyword id="KW-0793">Thylakoid</keyword>
<keyword id="KW-0813">Transport</keyword>
<evidence type="ECO:0000250" key="1"/>
<evidence type="ECO:0000250" key="2">
    <source>
        <dbReference type="UniProtKB" id="P00306"/>
    </source>
</evidence>
<evidence type="ECO:0000305" key="3"/>